<gene>
    <name evidence="5" type="primary">DVL7</name>
    <name evidence="6" type="synonym">RTFL20</name>
    <name evidence="8" type="ordered locus">At3g18518</name>
    <name evidence="9" type="ORF">MYF24</name>
</gene>
<sequence length="53" mass="6246">MREKYTKEEAVKNWEKKKNKPSSPKGVGEFLKKKKGRFYIIGKCITMLLCSHK</sequence>
<evidence type="ECO:0000250" key="1">
    <source>
        <dbReference type="UniProtKB" id="Q6X5V0"/>
    </source>
</evidence>
<evidence type="ECO:0000250" key="2">
    <source>
        <dbReference type="UniProtKB" id="Q7XXN8"/>
    </source>
</evidence>
<evidence type="ECO:0000255" key="3"/>
<evidence type="ECO:0000256" key="4">
    <source>
        <dbReference type="SAM" id="MobiDB-lite"/>
    </source>
</evidence>
<evidence type="ECO:0000303" key="5">
    <source>
    </source>
</evidence>
<evidence type="ECO:0000303" key="6">
    <source>
    </source>
</evidence>
<evidence type="ECO:0000305" key="7"/>
<evidence type="ECO:0000312" key="8">
    <source>
        <dbReference type="Araport" id="AT3G18518"/>
    </source>
</evidence>
<evidence type="ECO:0000312" key="9">
    <source>
        <dbReference type="EMBL" id="AB026658"/>
    </source>
</evidence>
<name>DVL7_ARATH</name>
<comment type="function">
    <text evidence="1">Small polypeptide acting as a regulatory molecule which coordinates cellular responses required for differentiation, growth and development, probably by restricting polar cell proliferation in lateral organs and coordinating socket cell recruitment and differentiation at trichome sites.</text>
</comment>
<comment type="subcellular location">
    <subcellularLocation>
        <location evidence="2">Cell membrane</location>
        <topology evidence="3">Single-pass membrane protein</topology>
    </subcellularLocation>
</comment>
<comment type="similarity">
    <text evidence="7">Belongs to the DVL/RTFL small polypeptides family.</text>
</comment>
<organism>
    <name type="scientific">Arabidopsis thaliana</name>
    <name type="common">Mouse-ear cress</name>
    <dbReference type="NCBI Taxonomy" id="3702"/>
    <lineage>
        <taxon>Eukaryota</taxon>
        <taxon>Viridiplantae</taxon>
        <taxon>Streptophyta</taxon>
        <taxon>Embryophyta</taxon>
        <taxon>Tracheophyta</taxon>
        <taxon>Spermatophyta</taxon>
        <taxon>Magnoliopsida</taxon>
        <taxon>eudicotyledons</taxon>
        <taxon>Gunneridae</taxon>
        <taxon>Pentapetalae</taxon>
        <taxon>rosids</taxon>
        <taxon>malvids</taxon>
        <taxon>Brassicales</taxon>
        <taxon>Brassicaceae</taxon>
        <taxon>Camelineae</taxon>
        <taxon>Arabidopsis</taxon>
    </lineage>
</organism>
<protein>
    <recommendedName>
        <fullName evidence="5">Small polypeptide DEVIL 7</fullName>
    </recommendedName>
    <alternativeName>
        <fullName evidence="6">Small polypeptide ROTUNDIFOLIA LIKE 20</fullName>
        <shortName evidence="6">Small polypeptide ROT-FOUR-LIKE 20</shortName>
    </alternativeName>
</protein>
<keyword id="KW-1003">Cell membrane</keyword>
<keyword id="KW-0217">Developmental protein</keyword>
<keyword id="KW-0472">Membrane</keyword>
<keyword id="KW-1185">Reference proteome</keyword>
<keyword id="KW-0812">Transmembrane</keyword>
<keyword id="KW-1133">Transmembrane helix</keyword>
<feature type="chain" id="PRO_0000452775" description="Small polypeptide DEVIL 7">
    <location>
        <begin position="1"/>
        <end position="53"/>
    </location>
</feature>
<feature type="transmembrane region" description="Helical" evidence="3">
    <location>
        <begin position="30"/>
        <end position="46"/>
    </location>
</feature>
<feature type="region of interest" description="Disordered" evidence="4">
    <location>
        <begin position="1"/>
        <end position="28"/>
    </location>
</feature>
<feature type="region of interest" description="Required for DVL/RTFL small polypeptide activity" evidence="2">
    <location>
        <begin position="22"/>
        <end position="53"/>
    </location>
</feature>
<feature type="compositionally biased region" description="Basic and acidic residues" evidence="4">
    <location>
        <begin position="1"/>
        <end position="16"/>
    </location>
</feature>
<accession>Q6IM94</accession>
<reference key="1">
    <citation type="journal article" date="2004" name="Plant J.">
        <title>DVL, a novel class of small polypeptides: overexpression alters Arabidopsis development.</title>
        <authorList>
            <person name="Wen J."/>
            <person name="Lease K.A."/>
            <person name="Walker J.C."/>
        </authorList>
    </citation>
    <scope>NUCLEOTIDE SEQUENCE [GENOMIC DNA]</scope>
    <scope>GENE FAMILY</scope>
    <scope>NOMENCLATURE</scope>
    <source>
        <strain>cv. Columbia</strain>
    </source>
</reference>
<reference key="2">
    <citation type="journal article" date="2000" name="DNA Res.">
        <title>Structural analysis of Arabidopsis thaliana chromosome 3. I. Sequence features of the regions of 4,504,864 bp covered by sixty P1 and TAC clones.</title>
        <authorList>
            <person name="Sato S."/>
            <person name="Nakamura Y."/>
            <person name="Kaneko T."/>
            <person name="Katoh T."/>
            <person name="Asamizu E."/>
            <person name="Tabata S."/>
        </authorList>
    </citation>
    <scope>NUCLEOTIDE SEQUENCE [LARGE SCALE GENOMIC DNA]</scope>
    <source>
        <strain>cv. Columbia</strain>
    </source>
</reference>
<reference key="3">
    <citation type="journal article" date="2017" name="Plant J.">
        <title>Araport11: a complete reannotation of the Arabidopsis thaliana reference genome.</title>
        <authorList>
            <person name="Cheng C.Y."/>
            <person name="Krishnakumar V."/>
            <person name="Chan A.P."/>
            <person name="Thibaud-Nissen F."/>
            <person name="Schobel S."/>
            <person name="Town C.D."/>
        </authorList>
    </citation>
    <scope>GENOME REANNOTATION</scope>
    <source>
        <strain>cv. Columbia</strain>
    </source>
</reference>
<reference key="4">
    <citation type="journal article" date="2004" name="Plant J.">
        <title>Overexpression of a novel small peptide ROTUNDIFOLIA4 decreases cell proliferation and alters leaf shape in Arabidopsis thaliana.</title>
        <authorList>
            <person name="Narita N.N."/>
            <person name="Moore S."/>
            <person name="Horiguchi G."/>
            <person name="Kubo M."/>
            <person name="Demura T."/>
            <person name="Fukuda H."/>
            <person name="Goodrich J."/>
            <person name="Tsukaya H."/>
        </authorList>
    </citation>
    <scope>GENE FAMILY</scope>
    <source>
        <strain>cv. Columbia</strain>
        <strain>cv. Landsberg erecta</strain>
    </source>
</reference>
<reference key="5">
    <citation type="journal article" date="2015" name="J. Plant Res.">
        <title>Comparative analysis of the RTFL peptide family on the control of plant organogenesis.</title>
        <authorList>
            <person name="Guo P."/>
            <person name="Yoshimura A."/>
            <person name="Ishikawa N."/>
            <person name="Yamaguchi T."/>
            <person name="Guo Y."/>
            <person name="Tsukaya H."/>
        </authorList>
    </citation>
    <scope>REVIEW</scope>
    <scope>GENE FAMILY</scope>
    <scope>NOMENCLATURE</scope>
    <source>
        <strain>cv. Columbia</strain>
    </source>
</reference>
<dbReference type="EMBL" id="BK001750">
    <property type="protein sequence ID" value="DAA02278.1"/>
    <property type="molecule type" value="Genomic_DNA"/>
</dbReference>
<dbReference type="EMBL" id="AB026658">
    <property type="status" value="NOT_ANNOTATED_CDS"/>
    <property type="molecule type" value="Genomic_DNA"/>
</dbReference>
<dbReference type="EMBL" id="CP002686">
    <property type="protein sequence ID" value="AEE76109.1"/>
    <property type="molecule type" value="Genomic_DNA"/>
</dbReference>
<dbReference type="RefSeq" id="NP_001078179.1">
    <property type="nucleotide sequence ID" value="NM_001084710.2"/>
</dbReference>
<dbReference type="PaxDb" id="3702-AT3G18518.1"/>
<dbReference type="ProteomicsDB" id="175477"/>
<dbReference type="EnsemblPlants" id="AT3G18518.1">
    <property type="protein sequence ID" value="AT3G18518.1"/>
    <property type="gene ID" value="AT3G18518"/>
</dbReference>
<dbReference type="GeneID" id="5008008"/>
<dbReference type="Gramene" id="AT3G18518.1">
    <property type="protein sequence ID" value="AT3G18518.1"/>
    <property type="gene ID" value="AT3G18518"/>
</dbReference>
<dbReference type="KEGG" id="ath:AT3G18518"/>
<dbReference type="Araport" id="AT3G18518"/>
<dbReference type="TAIR" id="AT3G18518">
    <property type="gene designation" value="RTFL20"/>
</dbReference>
<dbReference type="HOGENOM" id="CLU_3071460_0_0_1"/>
<dbReference type="InParanoid" id="Q6IM94"/>
<dbReference type="PhylomeDB" id="Q6IM94"/>
<dbReference type="PRO" id="PR:Q6IM94"/>
<dbReference type="Proteomes" id="UP000006548">
    <property type="component" value="Chromosome 3"/>
</dbReference>
<dbReference type="ExpressionAtlas" id="Q6IM94">
    <property type="expression patterns" value="baseline"/>
</dbReference>
<dbReference type="GO" id="GO:0005886">
    <property type="term" value="C:plasma membrane"/>
    <property type="evidence" value="ECO:0000250"/>
    <property type="project" value="UniProtKB"/>
</dbReference>
<dbReference type="GO" id="GO:0008285">
    <property type="term" value="P:negative regulation of cell population proliferation"/>
    <property type="evidence" value="ECO:0000250"/>
    <property type="project" value="UniProtKB"/>
</dbReference>
<dbReference type="GO" id="GO:0048367">
    <property type="term" value="P:shoot system development"/>
    <property type="evidence" value="ECO:0000250"/>
    <property type="project" value="TAIR"/>
</dbReference>
<dbReference type="InterPro" id="IPR012552">
    <property type="entry name" value="DVL"/>
</dbReference>
<dbReference type="Pfam" id="PF08137">
    <property type="entry name" value="DVL"/>
    <property type="match status" value="1"/>
</dbReference>
<proteinExistence type="inferred from homology"/>